<reference key="1">
    <citation type="journal article" date="2003" name="Nucleic Acids Res.">
        <title>Complete chloroplast DNA sequence of the moss Physcomitrella patens: evidence for the loss and relocation of rpoA from the chloroplast to the nucleus.</title>
        <authorList>
            <person name="Sugiura C."/>
            <person name="Kobayashi Y."/>
            <person name="Setsuyuki A."/>
            <person name="Sugita C."/>
            <person name="Sugita M."/>
        </authorList>
    </citation>
    <scope>NUCLEOTIDE SEQUENCE [LARGE SCALE GENOMIC DNA]</scope>
    <source>
        <strain>cv. Gransden 2004</strain>
    </source>
</reference>
<evidence type="ECO:0000250" key="1"/>
<evidence type="ECO:0000255" key="2"/>
<evidence type="ECO:0000305" key="3"/>
<keyword id="KW-0150">Chloroplast</keyword>
<keyword id="KW-0472">Membrane</keyword>
<keyword id="KW-0520">NAD</keyword>
<keyword id="KW-0521">NADP</keyword>
<keyword id="KW-0934">Plastid</keyword>
<keyword id="KW-0618">Plastoquinone</keyword>
<keyword id="KW-0874">Quinone</keyword>
<keyword id="KW-1185">Reference proteome</keyword>
<keyword id="KW-0793">Thylakoid</keyword>
<keyword id="KW-1278">Translocase</keyword>
<keyword id="KW-0812">Transmembrane</keyword>
<keyword id="KW-1133">Transmembrane helix</keyword>
<keyword id="KW-0813">Transport</keyword>
<feature type="chain" id="PRO_0000360284" description="NAD(P)H-quinone oxidoreductase subunit 6, chloroplastic">
    <location>
        <begin position="1"/>
        <end position="200"/>
    </location>
</feature>
<feature type="transmembrane region" description="Helical" evidence="2">
    <location>
        <begin position="13"/>
        <end position="33"/>
    </location>
</feature>
<feature type="transmembrane region" description="Helical" evidence="2">
    <location>
        <begin position="35"/>
        <end position="55"/>
    </location>
</feature>
<feature type="transmembrane region" description="Helical" evidence="2">
    <location>
        <begin position="64"/>
        <end position="84"/>
    </location>
</feature>
<feature type="transmembrane region" description="Helical" evidence="2">
    <location>
        <begin position="102"/>
        <end position="122"/>
    </location>
</feature>
<feature type="transmembrane region" description="Helical" evidence="2">
    <location>
        <begin position="156"/>
        <end position="176"/>
    </location>
</feature>
<gene>
    <name type="primary">ndhG</name>
</gene>
<name>NU6C_PHYPA</name>
<dbReference type="EC" id="7.1.1.-"/>
<dbReference type="EMBL" id="AP005672">
    <property type="protein sequence ID" value="BAC85091.1"/>
    <property type="molecule type" value="Genomic_DNA"/>
</dbReference>
<dbReference type="RefSeq" id="NP_904241.3">
    <property type="nucleotide sequence ID" value="NC_005087.2"/>
</dbReference>
<dbReference type="SMR" id="Q6YXQ0"/>
<dbReference type="FunCoup" id="Q6YXQ0">
    <property type="interactions" value="17"/>
</dbReference>
<dbReference type="STRING" id="3218.Q6YXQ0"/>
<dbReference type="GeneID" id="2546756"/>
<dbReference type="KEGG" id="ppp:2546756"/>
<dbReference type="InParanoid" id="Q6YXQ0"/>
<dbReference type="OrthoDB" id="1893972at2759"/>
<dbReference type="Proteomes" id="UP000006727">
    <property type="component" value="Chloroplast"/>
</dbReference>
<dbReference type="GO" id="GO:0009535">
    <property type="term" value="C:chloroplast thylakoid membrane"/>
    <property type="evidence" value="ECO:0007669"/>
    <property type="project" value="UniProtKB-SubCell"/>
</dbReference>
<dbReference type="GO" id="GO:0008137">
    <property type="term" value="F:NADH dehydrogenase (ubiquinone) activity"/>
    <property type="evidence" value="ECO:0007669"/>
    <property type="project" value="InterPro"/>
</dbReference>
<dbReference type="GO" id="GO:0048038">
    <property type="term" value="F:quinone binding"/>
    <property type="evidence" value="ECO:0007669"/>
    <property type="project" value="UniProtKB-KW"/>
</dbReference>
<dbReference type="FunFam" id="1.20.120.1200:FF:000002">
    <property type="entry name" value="NAD(P)H-quinone oxidoreductase subunit 6, chloroplastic"/>
    <property type="match status" value="1"/>
</dbReference>
<dbReference type="Gene3D" id="1.20.120.1200">
    <property type="entry name" value="NADH-ubiquinone/plastoquinone oxidoreductase chain 6, subunit NuoJ"/>
    <property type="match status" value="1"/>
</dbReference>
<dbReference type="InterPro" id="IPR050290">
    <property type="entry name" value="NAD(P)H-Q_Oxidoreduct_6"/>
</dbReference>
<dbReference type="InterPro" id="IPR001457">
    <property type="entry name" value="NADH_UbQ/plastoQ_OxRdtase_su6"/>
</dbReference>
<dbReference type="InterPro" id="IPR042106">
    <property type="entry name" value="Nuo/plastoQ_OxRdtase_6_NuoJ"/>
</dbReference>
<dbReference type="NCBIfam" id="NF005163">
    <property type="entry name" value="PRK06638.1-3"/>
    <property type="match status" value="1"/>
</dbReference>
<dbReference type="PANTHER" id="PTHR48479">
    <property type="entry name" value="NAD(P)H-QUINONE OXIDOREDUCTASE SUBUNIT 6, CHLOROPLASTIC"/>
    <property type="match status" value="1"/>
</dbReference>
<dbReference type="PANTHER" id="PTHR48479:SF1">
    <property type="entry name" value="NAD(P)H-QUINONE OXIDOREDUCTASE SUBUNIT 6, CHLOROPLASTIC"/>
    <property type="match status" value="1"/>
</dbReference>
<dbReference type="Pfam" id="PF00499">
    <property type="entry name" value="Oxidored_q3"/>
    <property type="match status" value="1"/>
</dbReference>
<organism>
    <name type="scientific">Physcomitrium patens</name>
    <name type="common">Spreading-leaved earth moss</name>
    <name type="synonym">Physcomitrella patens</name>
    <dbReference type="NCBI Taxonomy" id="3218"/>
    <lineage>
        <taxon>Eukaryota</taxon>
        <taxon>Viridiplantae</taxon>
        <taxon>Streptophyta</taxon>
        <taxon>Embryophyta</taxon>
        <taxon>Bryophyta</taxon>
        <taxon>Bryophytina</taxon>
        <taxon>Bryopsida</taxon>
        <taxon>Funariidae</taxon>
        <taxon>Funariales</taxon>
        <taxon>Funariaceae</taxon>
        <taxon>Physcomitrium</taxon>
    </lineage>
</organism>
<geneLocation type="chloroplast"/>
<sequence length="200" mass="22205">MNIIELFGPLQEIIFFILEIGVILGSLGVVLLSNIVYSAFFLGLVFFCISLLYFALNADFVAAAQILIYVGAVNVLIVFAVMLINKPESLKIFPVWTVGDKITLAICLTSFFLLVNIILNTSWSNITVITESKGFLESNFTQNVQRIGSLLLTQYLLPFELLSIVLLVALIGAIVIARRENLIETNKKKVLQIKKSPTTF</sequence>
<comment type="function">
    <text evidence="1">NDH shuttles electrons from NAD(P)H:plastoquinone, via FMN and iron-sulfur (Fe-S) centers, to quinones in the photosynthetic chain and possibly in a chloroplast respiratory chain. The immediate electron acceptor for the enzyme in this species is believed to be plastoquinone. Couples the redox reaction to proton translocation, and thus conserves the redox energy in a proton gradient (By similarity).</text>
</comment>
<comment type="catalytic activity">
    <reaction>
        <text>a plastoquinone + NADH + (n+1) H(+)(in) = a plastoquinol + NAD(+) + n H(+)(out)</text>
        <dbReference type="Rhea" id="RHEA:42608"/>
        <dbReference type="Rhea" id="RHEA-COMP:9561"/>
        <dbReference type="Rhea" id="RHEA-COMP:9562"/>
        <dbReference type="ChEBI" id="CHEBI:15378"/>
        <dbReference type="ChEBI" id="CHEBI:17757"/>
        <dbReference type="ChEBI" id="CHEBI:57540"/>
        <dbReference type="ChEBI" id="CHEBI:57945"/>
        <dbReference type="ChEBI" id="CHEBI:62192"/>
    </reaction>
</comment>
<comment type="catalytic activity">
    <reaction>
        <text>a plastoquinone + NADPH + (n+1) H(+)(in) = a plastoquinol + NADP(+) + n H(+)(out)</text>
        <dbReference type="Rhea" id="RHEA:42612"/>
        <dbReference type="Rhea" id="RHEA-COMP:9561"/>
        <dbReference type="Rhea" id="RHEA-COMP:9562"/>
        <dbReference type="ChEBI" id="CHEBI:15378"/>
        <dbReference type="ChEBI" id="CHEBI:17757"/>
        <dbReference type="ChEBI" id="CHEBI:57783"/>
        <dbReference type="ChEBI" id="CHEBI:58349"/>
        <dbReference type="ChEBI" id="CHEBI:62192"/>
    </reaction>
</comment>
<comment type="subunit">
    <text evidence="1">NDH is composed of at least 16 different subunits, 5 of which are encoded in the nucleus.</text>
</comment>
<comment type="subcellular location">
    <subcellularLocation>
        <location evidence="1">Plastid</location>
        <location evidence="1">Chloroplast thylakoid membrane</location>
        <topology evidence="1">Multi-pass membrane protein</topology>
    </subcellularLocation>
</comment>
<comment type="similarity">
    <text evidence="3">Belongs to the complex I subunit 6 family.</text>
</comment>
<protein>
    <recommendedName>
        <fullName>NAD(P)H-quinone oxidoreductase subunit 6, chloroplastic</fullName>
        <ecNumber>7.1.1.-</ecNumber>
    </recommendedName>
    <alternativeName>
        <fullName>NAD(P)H dehydrogenase subunit 6</fullName>
    </alternativeName>
    <alternativeName>
        <fullName>NADH-plastoquinone oxidoreductase subunit 6</fullName>
    </alternativeName>
</protein>
<accession>Q6YXQ0</accession>
<proteinExistence type="inferred from homology"/>